<sequence length="712" mass="77646">MTSPVAQCASVPDSGLLCLVMLARYHGLAADPEQLRHEFAEQAFCSETIQLAARRVGLKVRRHRPAPARLPRAPLPAIALDRQGGYFVLARFEPGADQAVLIQRPGQAPARLGQAEFEALWAGELLLCACAASPTQALARFDFSWFIPALVKHRHLIGEVLLISLVLQFIALLTPLFFQVVMDKVLVNNAMETLNVIAVGFLAAILFEALLTGIRTYLFAHTSSKLDVELGARLYAHLLRLPLAYFQARRVGDSVARVRELEHIRAFLTGNAVTVLLDVVFSVVFIAVMFFYSVKLTLVVLAALPCYFLLSLVLTPVLRRRLDVKFNRGAENQAFLVETVSGIDTVKSLAVEPQWQRNWDRQLAGYVAAGLSVANVAMLANTGVTLISRLVALGVLWVGATEVVAQRMTVGELVAFNMLSGHVTQPVIRLAQLWNDFQQTGVSMQRLGDILNCRTEVAGDKAQLPALRGSIELDRVSFRYRPDAADALRNVSLRIAPGEVVGVVGRSGSGKSTLTRLIQRMFVADRGRVLIDGHDIGIVDSASLRRQLGVVLQESTLFNRSVRDNIALTRPGASMHEVVAAARLAGAHEFICQLPEGYDTMLGENGVGLSGGQRQRIGIARALIHRPRVLILDEATSALDYESEHIIQRNMRDICDGRTVIIIAHRLSAVRCADRIVVMEGGEVAECGSHETLLAAGGLYARLQALQAGEAG</sequence>
<accession>P0DKX5</accession>
<accession>P18770</accession>
<keyword id="KW-0067">ATP-binding</keyword>
<keyword id="KW-1003">Cell membrane</keyword>
<keyword id="KW-0204">Cytolysis</keyword>
<keyword id="KW-0354">Hemolysis</keyword>
<keyword id="KW-0378">Hydrolase</keyword>
<keyword id="KW-0472">Membrane</keyword>
<keyword id="KW-0547">Nucleotide-binding</keyword>
<keyword id="KW-0645">Protease</keyword>
<keyword id="KW-1185">Reference proteome</keyword>
<keyword id="KW-0788">Thiol protease</keyword>
<keyword id="KW-1278">Translocase</keyword>
<keyword id="KW-0812">Transmembrane</keyword>
<keyword id="KW-1133">Transmembrane helix</keyword>
<keyword id="KW-0813">Transport</keyword>
<evidence type="ECO:0000250" key="1"/>
<evidence type="ECO:0000255" key="2">
    <source>
        <dbReference type="PROSITE-ProRule" id="PRU00362"/>
    </source>
</evidence>
<evidence type="ECO:0000255" key="3">
    <source>
        <dbReference type="PROSITE-ProRule" id="PRU00434"/>
    </source>
</evidence>
<evidence type="ECO:0000255" key="4">
    <source>
        <dbReference type="PROSITE-ProRule" id="PRU00441"/>
    </source>
</evidence>
<evidence type="ECO:0000305" key="5"/>
<gene>
    <name type="primary">cyaB</name>
    <name type="ordered locus">BP0761</name>
</gene>
<name>CYAB_BORPE</name>
<feature type="chain" id="PRO_0000092239" description="Cyclolysin secretion/processing ATP-binding protein CyaB">
    <location>
        <begin position="1"/>
        <end position="712"/>
    </location>
</feature>
<feature type="transmembrane region" description="Helical" evidence="4">
    <location>
        <begin position="160"/>
        <end position="180"/>
    </location>
</feature>
<feature type="transmembrane region" description="Helical" evidence="4">
    <location>
        <begin position="194"/>
        <end position="214"/>
    </location>
</feature>
<feature type="transmembrane region" description="Helical" evidence="4">
    <location>
        <begin position="272"/>
        <end position="292"/>
    </location>
</feature>
<feature type="transmembrane region" description="Helical" evidence="4">
    <location>
        <begin position="298"/>
        <end position="318"/>
    </location>
</feature>
<feature type="transmembrane region" description="Helical" evidence="4">
    <location>
        <begin position="367"/>
        <end position="387"/>
    </location>
</feature>
<feature type="transmembrane region" description="Helical" evidence="4">
    <location>
        <begin position="390"/>
        <end position="410"/>
    </location>
</feature>
<feature type="domain" description="Peptidase C39" evidence="2">
    <location>
        <begin position="7"/>
        <end position="128"/>
    </location>
</feature>
<feature type="domain" description="ABC transmembrane type-1" evidence="4">
    <location>
        <begin position="157"/>
        <end position="439"/>
    </location>
</feature>
<feature type="domain" description="ABC transporter" evidence="2 3">
    <location>
        <begin position="471"/>
        <end position="706"/>
    </location>
</feature>
<feature type="binding site" evidence="2 3">
    <location>
        <begin position="505"/>
        <end position="512"/>
    </location>
    <ligand>
        <name>ATP</name>
        <dbReference type="ChEBI" id="CHEBI:30616"/>
    </ligand>
</feature>
<protein>
    <recommendedName>
        <fullName>Cyclolysin secretion/processing ATP-binding protein CyaB</fullName>
        <ecNumber>3.4.22.-</ecNumber>
        <ecNumber>7.6.2.-</ecNumber>
    </recommendedName>
</protein>
<reference key="1">
    <citation type="journal article" date="2003" name="Nat. Genet.">
        <title>Comparative analysis of the genome sequences of Bordetella pertussis, Bordetella parapertussis and Bordetella bronchiseptica.</title>
        <authorList>
            <person name="Parkhill J."/>
            <person name="Sebaihia M."/>
            <person name="Preston A."/>
            <person name="Murphy L.D."/>
            <person name="Thomson N.R."/>
            <person name="Harris D.E."/>
            <person name="Holden M.T.G."/>
            <person name="Churcher C.M."/>
            <person name="Bentley S.D."/>
            <person name="Mungall K.L."/>
            <person name="Cerdeno-Tarraga A.-M."/>
            <person name="Temple L."/>
            <person name="James K.D."/>
            <person name="Harris B."/>
            <person name="Quail M.A."/>
            <person name="Achtman M."/>
            <person name="Atkin R."/>
            <person name="Baker S."/>
            <person name="Basham D."/>
            <person name="Bason N."/>
            <person name="Cherevach I."/>
            <person name="Chillingworth T."/>
            <person name="Collins M."/>
            <person name="Cronin A."/>
            <person name="Davis P."/>
            <person name="Doggett J."/>
            <person name="Feltwell T."/>
            <person name="Goble A."/>
            <person name="Hamlin N."/>
            <person name="Hauser H."/>
            <person name="Holroyd S."/>
            <person name="Jagels K."/>
            <person name="Leather S."/>
            <person name="Moule S."/>
            <person name="Norberczak H."/>
            <person name="O'Neil S."/>
            <person name="Ormond D."/>
            <person name="Price C."/>
            <person name="Rabbinowitsch E."/>
            <person name="Rutter S."/>
            <person name="Sanders M."/>
            <person name="Saunders D."/>
            <person name="Seeger K."/>
            <person name="Sharp S."/>
            <person name="Simmonds M."/>
            <person name="Skelton J."/>
            <person name="Squares R."/>
            <person name="Squares S."/>
            <person name="Stevens K."/>
            <person name="Unwin L."/>
            <person name="Whitehead S."/>
            <person name="Barrell B.G."/>
            <person name="Maskell D.J."/>
        </authorList>
    </citation>
    <scope>NUCLEOTIDE SEQUENCE [LARGE SCALE GENOMIC DNA]</scope>
    <source>
        <strain>Tohama I / ATCC BAA-589 / NCTC 13251</strain>
    </source>
</reference>
<dbReference type="EC" id="3.4.22.-"/>
<dbReference type="EC" id="7.6.2.-"/>
<dbReference type="EMBL" id="BX640413">
    <property type="protein sequence ID" value="CAE41067.1"/>
    <property type="molecule type" value="Genomic_DNA"/>
</dbReference>
<dbReference type="RefSeq" id="NP_879579.1">
    <property type="nucleotide sequence ID" value="NC_002929.2"/>
</dbReference>
<dbReference type="RefSeq" id="WP_010929996.1">
    <property type="nucleotide sequence ID" value="NZ_CP039022.1"/>
</dbReference>
<dbReference type="SMR" id="P0DKX5"/>
<dbReference type="STRING" id="257313.BP0761"/>
<dbReference type="PaxDb" id="257313-BP0761"/>
<dbReference type="GeneID" id="69600713"/>
<dbReference type="KEGG" id="bpe:BP0761"/>
<dbReference type="PATRIC" id="fig|257313.5.peg.814"/>
<dbReference type="eggNOG" id="COG2274">
    <property type="taxonomic scope" value="Bacteria"/>
</dbReference>
<dbReference type="HOGENOM" id="CLU_000604_95_4_4"/>
<dbReference type="Proteomes" id="UP000002676">
    <property type="component" value="Chromosome"/>
</dbReference>
<dbReference type="GO" id="GO:0005886">
    <property type="term" value="C:plasma membrane"/>
    <property type="evidence" value="ECO:0007669"/>
    <property type="project" value="UniProtKB-SubCell"/>
</dbReference>
<dbReference type="GO" id="GO:0030256">
    <property type="term" value="C:type I protein secretion system complex"/>
    <property type="evidence" value="ECO:0007669"/>
    <property type="project" value="InterPro"/>
</dbReference>
<dbReference type="GO" id="GO:0140359">
    <property type="term" value="F:ABC-type transporter activity"/>
    <property type="evidence" value="ECO:0007669"/>
    <property type="project" value="InterPro"/>
</dbReference>
<dbReference type="GO" id="GO:0005524">
    <property type="term" value="F:ATP binding"/>
    <property type="evidence" value="ECO:0007669"/>
    <property type="project" value="UniProtKB-KW"/>
</dbReference>
<dbReference type="GO" id="GO:0016887">
    <property type="term" value="F:ATP hydrolysis activity"/>
    <property type="evidence" value="ECO:0007669"/>
    <property type="project" value="InterPro"/>
</dbReference>
<dbReference type="GO" id="GO:0034040">
    <property type="term" value="F:ATPase-coupled lipid transmembrane transporter activity"/>
    <property type="evidence" value="ECO:0007669"/>
    <property type="project" value="TreeGrafter"/>
</dbReference>
<dbReference type="GO" id="GO:0008234">
    <property type="term" value="F:cysteine-type peptidase activity"/>
    <property type="evidence" value="ECO:0007669"/>
    <property type="project" value="UniProtKB-KW"/>
</dbReference>
<dbReference type="GO" id="GO:0031640">
    <property type="term" value="P:killing of cells of another organism"/>
    <property type="evidence" value="ECO:0007669"/>
    <property type="project" value="UniProtKB-KW"/>
</dbReference>
<dbReference type="GO" id="GO:0030253">
    <property type="term" value="P:protein secretion by the type I secretion system"/>
    <property type="evidence" value="ECO:0007669"/>
    <property type="project" value="InterPro"/>
</dbReference>
<dbReference type="GO" id="GO:0006508">
    <property type="term" value="P:proteolysis"/>
    <property type="evidence" value="ECO:0007669"/>
    <property type="project" value="UniProtKB-KW"/>
</dbReference>
<dbReference type="CDD" id="cd18588">
    <property type="entry name" value="ABC_6TM_CyaB_HlyB_like"/>
    <property type="match status" value="1"/>
</dbReference>
<dbReference type="CDD" id="cd03252">
    <property type="entry name" value="ABCC_Hemolysin"/>
    <property type="match status" value="1"/>
</dbReference>
<dbReference type="CDD" id="cd02417">
    <property type="entry name" value="Peptidase_C39_likeA"/>
    <property type="match status" value="1"/>
</dbReference>
<dbReference type="FunFam" id="3.40.50.300:FF:000299">
    <property type="entry name" value="ABC transporter ATP-binding protein/permease"/>
    <property type="match status" value="1"/>
</dbReference>
<dbReference type="FunFam" id="1.20.1560.10:FF:000056">
    <property type="entry name" value="Alpha-hemolysin translocation ATP-binding protein HlyB"/>
    <property type="match status" value="1"/>
</dbReference>
<dbReference type="Gene3D" id="1.20.1560.10">
    <property type="entry name" value="ABC transporter type 1, transmembrane domain"/>
    <property type="match status" value="1"/>
</dbReference>
<dbReference type="Gene3D" id="3.90.70.10">
    <property type="entry name" value="Cysteine proteinases"/>
    <property type="match status" value="1"/>
</dbReference>
<dbReference type="Gene3D" id="3.40.50.300">
    <property type="entry name" value="P-loop containing nucleotide triphosphate hydrolases"/>
    <property type="match status" value="1"/>
</dbReference>
<dbReference type="InterPro" id="IPR003593">
    <property type="entry name" value="AAA+_ATPase"/>
</dbReference>
<dbReference type="InterPro" id="IPR011527">
    <property type="entry name" value="ABC1_TM_dom"/>
</dbReference>
<dbReference type="InterPro" id="IPR036640">
    <property type="entry name" value="ABC1_TM_sf"/>
</dbReference>
<dbReference type="InterPro" id="IPR003439">
    <property type="entry name" value="ABC_transporter-like_ATP-bd"/>
</dbReference>
<dbReference type="InterPro" id="IPR017871">
    <property type="entry name" value="ABC_transporter-like_CS"/>
</dbReference>
<dbReference type="InterPro" id="IPR010132">
    <property type="entry name" value="ATPase_T1SS_HlyB"/>
</dbReference>
<dbReference type="InterPro" id="IPR027417">
    <property type="entry name" value="P-loop_NTPase"/>
</dbReference>
<dbReference type="InterPro" id="IPR005074">
    <property type="entry name" value="Peptidase_C39"/>
</dbReference>
<dbReference type="InterPro" id="IPR039395">
    <property type="entry name" value="Peptidase_C39-like_A"/>
</dbReference>
<dbReference type="InterPro" id="IPR039421">
    <property type="entry name" value="Type_1_exporter"/>
</dbReference>
<dbReference type="NCBIfam" id="TIGR01846">
    <property type="entry name" value="type_I_sec_HlyB"/>
    <property type="match status" value="1"/>
</dbReference>
<dbReference type="PANTHER" id="PTHR24221">
    <property type="entry name" value="ATP-BINDING CASSETTE SUB-FAMILY B"/>
    <property type="match status" value="1"/>
</dbReference>
<dbReference type="PANTHER" id="PTHR24221:SF647">
    <property type="entry name" value="BLL6336 PROTEIN"/>
    <property type="match status" value="1"/>
</dbReference>
<dbReference type="Pfam" id="PF00664">
    <property type="entry name" value="ABC_membrane"/>
    <property type="match status" value="1"/>
</dbReference>
<dbReference type="Pfam" id="PF00005">
    <property type="entry name" value="ABC_tran"/>
    <property type="match status" value="1"/>
</dbReference>
<dbReference type="Pfam" id="PF03412">
    <property type="entry name" value="Peptidase_C39"/>
    <property type="match status" value="1"/>
</dbReference>
<dbReference type="SMART" id="SM00382">
    <property type="entry name" value="AAA"/>
    <property type="match status" value="1"/>
</dbReference>
<dbReference type="SUPFAM" id="SSF90123">
    <property type="entry name" value="ABC transporter transmembrane region"/>
    <property type="match status" value="1"/>
</dbReference>
<dbReference type="SUPFAM" id="SSF52540">
    <property type="entry name" value="P-loop containing nucleoside triphosphate hydrolases"/>
    <property type="match status" value="1"/>
</dbReference>
<dbReference type="PROSITE" id="PS50929">
    <property type="entry name" value="ABC_TM1F"/>
    <property type="match status" value="1"/>
</dbReference>
<dbReference type="PROSITE" id="PS00211">
    <property type="entry name" value="ABC_TRANSPORTER_1"/>
    <property type="match status" value="1"/>
</dbReference>
<dbReference type="PROSITE" id="PS50893">
    <property type="entry name" value="ABC_TRANSPORTER_2"/>
    <property type="match status" value="1"/>
</dbReference>
<dbReference type="PROSITE" id="PS50990">
    <property type="entry name" value="PEPTIDASE_C39"/>
    <property type="match status" value="1"/>
</dbReference>
<proteinExistence type="inferred from homology"/>
<organism>
    <name type="scientific">Bordetella pertussis (strain Tohama I / ATCC BAA-589 / NCTC 13251)</name>
    <dbReference type="NCBI Taxonomy" id="257313"/>
    <lineage>
        <taxon>Bacteria</taxon>
        <taxon>Pseudomonadati</taxon>
        <taxon>Pseudomonadota</taxon>
        <taxon>Betaproteobacteria</taxon>
        <taxon>Burkholderiales</taxon>
        <taxon>Alcaligenaceae</taxon>
        <taxon>Bordetella</taxon>
    </lineage>
</organism>
<comment type="function">
    <text evidence="1">Involved in the export of calmodulin-sensitive adenylate cyclase-hemolysin (cyclolysin).</text>
</comment>
<comment type="subcellular location">
    <subcellularLocation>
        <location evidence="1">Cell membrane</location>
        <topology evidence="4">Multi-pass membrane protein</topology>
    </subcellularLocation>
</comment>
<comment type="similarity">
    <text evidence="5">Belongs to the ABC transporter superfamily. Cyclolysin exporter (TC 3.A.1.109.2) family.</text>
</comment>